<organism>
    <name type="scientific">Drosophila melanogaster</name>
    <name type="common">Fruit fly</name>
    <dbReference type="NCBI Taxonomy" id="7227"/>
    <lineage>
        <taxon>Eukaryota</taxon>
        <taxon>Metazoa</taxon>
        <taxon>Ecdysozoa</taxon>
        <taxon>Arthropoda</taxon>
        <taxon>Hexapoda</taxon>
        <taxon>Insecta</taxon>
        <taxon>Pterygota</taxon>
        <taxon>Neoptera</taxon>
        <taxon>Endopterygota</taxon>
        <taxon>Diptera</taxon>
        <taxon>Brachycera</taxon>
        <taxon>Muscomorpha</taxon>
        <taxon>Ephydroidea</taxon>
        <taxon>Drosophilidae</taxon>
        <taxon>Drosophila</taxon>
        <taxon>Sophophora</taxon>
    </lineage>
</organism>
<keyword id="KW-0175">Coiled coil</keyword>
<keyword id="KW-0931">ER-Golgi transport</keyword>
<keyword id="KW-0333">Golgi apparatus</keyword>
<keyword id="KW-0472">Membrane</keyword>
<keyword id="KW-0653">Protein transport</keyword>
<keyword id="KW-1185">Reference proteome</keyword>
<keyword id="KW-0812">Transmembrane</keyword>
<keyword id="KW-1133">Transmembrane helix</keyword>
<keyword id="KW-0813">Transport</keyword>
<protein>
    <recommendedName>
        <fullName>Golgi SNAP receptor complex member 1</fullName>
    </recommendedName>
    <alternativeName>
        <fullName>Probable 28 kDa Golgi SNARE protein</fullName>
    </alternativeName>
</protein>
<dbReference type="EMBL" id="AE014297">
    <property type="protein sequence ID" value="AAF55579.1"/>
    <property type="molecule type" value="Genomic_DNA"/>
</dbReference>
<dbReference type="EMBL" id="AY094935">
    <property type="protein sequence ID" value="AAM11288.1"/>
    <property type="molecule type" value="mRNA"/>
</dbReference>
<dbReference type="RefSeq" id="NP_650739.2">
    <property type="nucleotide sequence ID" value="NM_142482.4"/>
</dbReference>
<dbReference type="SMR" id="Q9VE50"/>
<dbReference type="BioGRID" id="73975">
    <property type="interactions" value="28"/>
</dbReference>
<dbReference type="FunCoup" id="Q9VE50">
    <property type="interactions" value="1962"/>
</dbReference>
<dbReference type="IntAct" id="Q9VE50">
    <property type="interactions" value="29"/>
</dbReference>
<dbReference type="STRING" id="7227.FBpp0083076"/>
<dbReference type="PaxDb" id="7227-FBpp0083076"/>
<dbReference type="DNASU" id="248102"/>
<dbReference type="EnsemblMetazoa" id="FBtr0083661">
    <property type="protein sequence ID" value="FBpp0083076"/>
    <property type="gene ID" value="FBgn0044871"/>
</dbReference>
<dbReference type="GeneID" id="248102"/>
<dbReference type="KEGG" id="dme:Dmel_CG7700"/>
<dbReference type="UCSC" id="CG7700-RA">
    <property type="organism name" value="d. melanogaster"/>
</dbReference>
<dbReference type="AGR" id="FB:FBgn0044871"/>
<dbReference type="CTD" id="248102"/>
<dbReference type="FlyBase" id="FBgn0044871">
    <property type="gene designation" value="Gos28"/>
</dbReference>
<dbReference type="VEuPathDB" id="VectorBase:FBgn0044871"/>
<dbReference type="eggNOG" id="KOG3208">
    <property type="taxonomic scope" value="Eukaryota"/>
</dbReference>
<dbReference type="GeneTree" id="ENSGT00390000008688"/>
<dbReference type="HOGENOM" id="CLU_078034_0_1_1"/>
<dbReference type="InParanoid" id="Q9VE50"/>
<dbReference type="OMA" id="EILRDYC"/>
<dbReference type="OrthoDB" id="422156at2759"/>
<dbReference type="PhylomeDB" id="Q9VE50"/>
<dbReference type="Reactome" id="R-DME-6807878">
    <property type="pathway name" value="COPI-mediated anterograde transport"/>
</dbReference>
<dbReference type="Reactome" id="R-DME-6811438">
    <property type="pathway name" value="Intra-Golgi traffic"/>
</dbReference>
<dbReference type="BioGRID-ORCS" id="248102">
    <property type="hits" value="0 hits in 1 CRISPR screen"/>
</dbReference>
<dbReference type="ChiTaRS" id="Gos28">
    <property type="organism name" value="fly"/>
</dbReference>
<dbReference type="GenomeRNAi" id="248102"/>
<dbReference type="PRO" id="PR:Q9VE50"/>
<dbReference type="Proteomes" id="UP000000803">
    <property type="component" value="Chromosome 3R"/>
</dbReference>
<dbReference type="Bgee" id="FBgn0044871">
    <property type="expression patterns" value="Expressed in saliva-secreting gland and 116 other cell types or tissues"/>
</dbReference>
<dbReference type="ExpressionAtlas" id="Q9VE50">
    <property type="expression patterns" value="baseline and differential"/>
</dbReference>
<dbReference type="GO" id="GO:0005801">
    <property type="term" value="C:cis-Golgi network"/>
    <property type="evidence" value="ECO:0007669"/>
    <property type="project" value="InterPro"/>
</dbReference>
<dbReference type="GO" id="GO:0005797">
    <property type="term" value="C:Golgi medial cisterna"/>
    <property type="evidence" value="ECO:0000318"/>
    <property type="project" value="GO_Central"/>
</dbReference>
<dbReference type="GO" id="GO:0000139">
    <property type="term" value="C:Golgi membrane"/>
    <property type="evidence" value="ECO:0000318"/>
    <property type="project" value="GO_Central"/>
</dbReference>
<dbReference type="GO" id="GO:0000138">
    <property type="term" value="C:Golgi trans cisterna"/>
    <property type="evidence" value="ECO:0000250"/>
    <property type="project" value="UniProtKB"/>
</dbReference>
<dbReference type="GO" id="GO:0016020">
    <property type="term" value="C:membrane"/>
    <property type="evidence" value="ECO:0000314"/>
    <property type="project" value="FlyBase"/>
</dbReference>
<dbReference type="GO" id="GO:0031201">
    <property type="term" value="C:SNARE complex"/>
    <property type="evidence" value="ECO:0000250"/>
    <property type="project" value="FlyBase"/>
</dbReference>
<dbReference type="GO" id="GO:0005484">
    <property type="term" value="F:SNAP receptor activity"/>
    <property type="evidence" value="ECO:0000315"/>
    <property type="project" value="FlyBase"/>
</dbReference>
<dbReference type="GO" id="GO:0006888">
    <property type="term" value="P:endoplasmic reticulum to Golgi vesicle-mediated transport"/>
    <property type="evidence" value="ECO:0000250"/>
    <property type="project" value="UniProtKB"/>
</dbReference>
<dbReference type="GO" id="GO:0048193">
    <property type="term" value="P:Golgi vesicle transport"/>
    <property type="evidence" value="ECO:0000250"/>
    <property type="project" value="FlyBase"/>
</dbReference>
<dbReference type="GO" id="GO:0048219">
    <property type="term" value="P:inter-Golgi cisterna vesicle-mediated transport"/>
    <property type="evidence" value="ECO:0000315"/>
    <property type="project" value="FlyBase"/>
</dbReference>
<dbReference type="GO" id="GO:0006891">
    <property type="term" value="P:intra-Golgi vesicle-mediated transport"/>
    <property type="evidence" value="ECO:0000250"/>
    <property type="project" value="UniProtKB"/>
</dbReference>
<dbReference type="GO" id="GO:0015031">
    <property type="term" value="P:protein transport"/>
    <property type="evidence" value="ECO:0007669"/>
    <property type="project" value="UniProtKB-KW"/>
</dbReference>
<dbReference type="GO" id="GO:0006906">
    <property type="term" value="P:vesicle fusion"/>
    <property type="evidence" value="ECO:0000250"/>
    <property type="project" value="FlyBase"/>
</dbReference>
<dbReference type="InterPro" id="IPR023601">
    <property type="entry name" value="Golgi_SNAP_su1"/>
</dbReference>
<dbReference type="PANTHER" id="PTHR21094:SF2">
    <property type="entry name" value="GOLGI SNAP RECEPTOR COMPLEX MEMBER 1"/>
    <property type="match status" value="1"/>
</dbReference>
<dbReference type="PANTHER" id="PTHR21094">
    <property type="entry name" value="GOS-28 SNARE- RELATED"/>
    <property type="match status" value="1"/>
</dbReference>
<dbReference type="Pfam" id="PF12352">
    <property type="entry name" value="V-SNARE_C"/>
    <property type="match status" value="1"/>
</dbReference>
<dbReference type="PIRSF" id="PIRSF027109">
    <property type="entry name" value="Golgi_SNARE"/>
    <property type="match status" value="1"/>
</dbReference>
<sequence>MGGSSYDVLRKQARSLENEIDLKLVAFSKIGAGSGGGGSGGLGGVDTSPLLGEHVFDSLSEEIEQMLEKLSSLNESMSDLPASGAAAMHTLQRHREILQGYRQEFNKICANHTMRIEREELLRGSGLATSSGSPSISGLNRREMYLKESGHLNSASHLVNDQINIAIETRDHLHAQRQAFKRLQTRFNDISNRFPLISSLIQRINIKKRRDSLILGAVIGFCVILLLLYAFN</sequence>
<proteinExistence type="evidence at transcript level"/>
<reference key="1">
    <citation type="journal article" date="2000" name="Science">
        <title>The genome sequence of Drosophila melanogaster.</title>
        <authorList>
            <person name="Adams M.D."/>
            <person name="Celniker S.E."/>
            <person name="Holt R.A."/>
            <person name="Evans C.A."/>
            <person name="Gocayne J.D."/>
            <person name="Amanatides P.G."/>
            <person name="Scherer S.E."/>
            <person name="Li P.W."/>
            <person name="Hoskins R.A."/>
            <person name="Galle R.F."/>
            <person name="George R.A."/>
            <person name="Lewis S.E."/>
            <person name="Richards S."/>
            <person name="Ashburner M."/>
            <person name="Henderson S.N."/>
            <person name="Sutton G.G."/>
            <person name="Wortman J.R."/>
            <person name="Yandell M.D."/>
            <person name="Zhang Q."/>
            <person name="Chen L.X."/>
            <person name="Brandon R.C."/>
            <person name="Rogers Y.-H.C."/>
            <person name="Blazej R.G."/>
            <person name="Champe M."/>
            <person name="Pfeiffer B.D."/>
            <person name="Wan K.H."/>
            <person name="Doyle C."/>
            <person name="Baxter E.G."/>
            <person name="Helt G."/>
            <person name="Nelson C.R."/>
            <person name="Miklos G.L.G."/>
            <person name="Abril J.F."/>
            <person name="Agbayani A."/>
            <person name="An H.-J."/>
            <person name="Andrews-Pfannkoch C."/>
            <person name="Baldwin D."/>
            <person name="Ballew R.M."/>
            <person name="Basu A."/>
            <person name="Baxendale J."/>
            <person name="Bayraktaroglu L."/>
            <person name="Beasley E.M."/>
            <person name="Beeson K.Y."/>
            <person name="Benos P.V."/>
            <person name="Berman B.P."/>
            <person name="Bhandari D."/>
            <person name="Bolshakov S."/>
            <person name="Borkova D."/>
            <person name="Botchan M.R."/>
            <person name="Bouck J."/>
            <person name="Brokstein P."/>
            <person name="Brottier P."/>
            <person name="Burtis K.C."/>
            <person name="Busam D.A."/>
            <person name="Butler H."/>
            <person name="Cadieu E."/>
            <person name="Center A."/>
            <person name="Chandra I."/>
            <person name="Cherry J.M."/>
            <person name="Cawley S."/>
            <person name="Dahlke C."/>
            <person name="Davenport L.B."/>
            <person name="Davies P."/>
            <person name="de Pablos B."/>
            <person name="Delcher A."/>
            <person name="Deng Z."/>
            <person name="Mays A.D."/>
            <person name="Dew I."/>
            <person name="Dietz S.M."/>
            <person name="Dodson K."/>
            <person name="Doup L.E."/>
            <person name="Downes M."/>
            <person name="Dugan-Rocha S."/>
            <person name="Dunkov B.C."/>
            <person name="Dunn P."/>
            <person name="Durbin K.J."/>
            <person name="Evangelista C.C."/>
            <person name="Ferraz C."/>
            <person name="Ferriera S."/>
            <person name="Fleischmann W."/>
            <person name="Fosler C."/>
            <person name="Gabrielian A.E."/>
            <person name="Garg N.S."/>
            <person name="Gelbart W.M."/>
            <person name="Glasser K."/>
            <person name="Glodek A."/>
            <person name="Gong F."/>
            <person name="Gorrell J.H."/>
            <person name="Gu Z."/>
            <person name="Guan P."/>
            <person name="Harris M."/>
            <person name="Harris N.L."/>
            <person name="Harvey D.A."/>
            <person name="Heiman T.J."/>
            <person name="Hernandez J.R."/>
            <person name="Houck J."/>
            <person name="Hostin D."/>
            <person name="Houston K.A."/>
            <person name="Howland T.J."/>
            <person name="Wei M.-H."/>
            <person name="Ibegwam C."/>
            <person name="Jalali M."/>
            <person name="Kalush F."/>
            <person name="Karpen G.H."/>
            <person name="Ke Z."/>
            <person name="Kennison J.A."/>
            <person name="Ketchum K.A."/>
            <person name="Kimmel B.E."/>
            <person name="Kodira C.D."/>
            <person name="Kraft C.L."/>
            <person name="Kravitz S."/>
            <person name="Kulp D."/>
            <person name="Lai Z."/>
            <person name="Lasko P."/>
            <person name="Lei Y."/>
            <person name="Levitsky A.A."/>
            <person name="Li J.H."/>
            <person name="Li Z."/>
            <person name="Liang Y."/>
            <person name="Lin X."/>
            <person name="Liu X."/>
            <person name="Mattei B."/>
            <person name="McIntosh T.C."/>
            <person name="McLeod M.P."/>
            <person name="McPherson D."/>
            <person name="Merkulov G."/>
            <person name="Milshina N.V."/>
            <person name="Mobarry C."/>
            <person name="Morris J."/>
            <person name="Moshrefi A."/>
            <person name="Mount S.M."/>
            <person name="Moy M."/>
            <person name="Murphy B."/>
            <person name="Murphy L."/>
            <person name="Muzny D.M."/>
            <person name="Nelson D.L."/>
            <person name="Nelson D.R."/>
            <person name="Nelson K.A."/>
            <person name="Nixon K."/>
            <person name="Nusskern D.R."/>
            <person name="Pacleb J.M."/>
            <person name="Palazzolo M."/>
            <person name="Pittman G.S."/>
            <person name="Pan S."/>
            <person name="Pollard J."/>
            <person name="Puri V."/>
            <person name="Reese M.G."/>
            <person name="Reinert K."/>
            <person name="Remington K."/>
            <person name="Saunders R.D.C."/>
            <person name="Scheeler F."/>
            <person name="Shen H."/>
            <person name="Shue B.C."/>
            <person name="Siden-Kiamos I."/>
            <person name="Simpson M."/>
            <person name="Skupski M.P."/>
            <person name="Smith T.J."/>
            <person name="Spier E."/>
            <person name="Spradling A.C."/>
            <person name="Stapleton M."/>
            <person name="Strong R."/>
            <person name="Sun E."/>
            <person name="Svirskas R."/>
            <person name="Tector C."/>
            <person name="Turner R."/>
            <person name="Venter E."/>
            <person name="Wang A.H."/>
            <person name="Wang X."/>
            <person name="Wang Z.-Y."/>
            <person name="Wassarman D.A."/>
            <person name="Weinstock G.M."/>
            <person name="Weissenbach J."/>
            <person name="Williams S.M."/>
            <person name="Woodage T."/>
            <person name="Worley K.C."/>
            <person name="Wu D."/>
            <person name="Yang S."/>
            <person name="Yao Q.A."/>
            <person name="Ye J."/>
            <person name="Yeh R.-F."/>
            <person name="Zaveri J.S."/>
            <person name="Zhan M."/>
            <person name="Zhang G."/>
            <person name="Zhao Q."/>
            <person name="Zheng L."/>
            <person name="Zheng X.H."/>
            <person name="Zhong F.N."/>
            <person name="Zhong W."/>
            <person name="Zhou X."/>
            <person name="Zhu S.C."/>
            <person name="Zhu X."/>
            <person name="Smith H.O."/>
            <person name="Gibbs R.A."/>
            <person name="Myers E.W."/>
            <person name="Rubin G.M."/>
            <person name="Venter J.C."/>
        </authorList>
    </citation>
    <scope>NUCLEOTIDE SEQUENCE [LARGE SCALE GENOMIC DNA]</scope>
    <source>
        <strain>Berkeley</strain>
    </source>
</reference>
<reference key="2">
    <citation type="journal article" date="2002" name="Genome Biol.">
        <title>Annotation of the Drosophila melanogaster euchromatic genome: a systematic review.</title>
        <authorList>
            <person name="Misra S."/>
            <person name="Crosby M.A."/>
            <person name="Mungall C.J."/>
            <person name="Matthews B.B."/>
            <person name="Campbell K.S."/>
            <person name="Hradecky P."/>
            <person name="Huang Y."/>
            <person name="Kaminker J.S."/>
            <person name="Millburn G.H."/>
            <person name="Prochnik S.E."/>
            <person name="Smith C.D."/>
            <person name="Tupy J.L."/>
            <person name="Whitfield E.J."/>
            <person name="Bayraktaroglu L."/>
            <person name="Berman B.P."/>
            <person name="Bettencourt B.R."/>
            <person name="Celniker S.E."/>
            <person name="de Grey A.D.N.J."/>
            <person name="Drysdale R.A."/>
            <person name="Harris N.L."/>
            <person name="Richter J."/>
            <person name="Russo S."/>
            <person name="Schroeder A.J."/>
            <person name="Shu S.Q."/>
            <person name="Stapleton M."/>
            <person name="Yamada C."/>
            <person name="Ashburner M."/>
            <person name="Gelbart W.M."/>
            <person name="Rubin G.M."/>
            <person name="Lewis S.E."/>
        </authorList>
    </citation>
    <scope>GENOME REANNOTATION</scope>
    <source>
        <strain>Berkeley</strain>
    </source>
</reference>
<reference key="3">
    <citation type="journal article" date="2002" name="Genome Biol.">
        <title>A Drosophila full-length cDNA resource.</title>
        <authorList>
            <person name="Stapleton M."/>
            <person name="Carlson J.W."/>
            <person name="Brokstein P."/>
            <person name="Yu C."/>
            <person name="Champe M."/>
            <person name="George R.A."/>
            <person name="Guarin H."/>
            <person name="Kronmiller B."/>
            <person name="Pacleb J.M."/>
            <person name="Park S."/>
            <person name="Wan K.H."/>
            <person name="Rubin G.M."/>
            <person name="Celniker S.E."/>
        </authorList>
    </citation>
    <scope>NUCLEOTIDE SEQUENCE [LARGE SCALE MRNA]</scope>
    <source>
        <strain>Berkeley</strain>
        <tissue>Head</tissue>
    </source>
</reference>
<comment type="function">
    <text evidence="1">Involved in transport from the ER to the Golgi apparatus as well as in intra-Golgi transport. It belongs to a super-family of proteins called t-SNAREs or soluble NSF (N-ethylmaleimide-sensitive factor) attachment protein receptor (By similarity).</text>
</comment>
<comment type="subunit">
    <text evidence="1">Component of several multiprotein Golgi SNARE complexes.</text>
</comment>
<comment type="subcellular location">
    <subcellularLocation>
        <location evidence="1">Golgi apparatus membrane</location>
        <topology evidence="1">Single-pass type IV membrane protein</topology>
    </subcellularLocation>
</comment>
<comment type="similarity">
    <text evidence="3">Belongs to the GOSR1 family.</text>
</comment>
<gene>
    <name type="primary">Gos28</name>
    <name type="ORF">CG7700</name>
</gene>
<accession>Q9VE50</accession>
<accession>Q8SWZ4</accession>
<feature type="chain" id="PRO_0000212546" description="Golgi SNAP receptor complex member 1">
    <location>
        <begin position="1"/>
        <end position="232"/>
    </location>
</feature>
<feature type="topological domain" description="Cytoplasmic" evidence="2">
    <location>
        <begin position="1"/>
        <end position="211"/>
    </location>
</feature>
<feature type="transmembrane region" description="Helical; Anchor for type IV membrane protein" evidence="2">
    <location>
        <begin position="212"/>
        <end position="232"/>
    </location>
</feature>
<feature type="coiled-coil region" evidence="2">
    <location>
        <begin position="6"/>
        <end position="23"/>
    </location>
</feature>
<feature type="coiled-coil region" evidence="2">
    <location>
        <begin position="52"/>
        <end position="80"/>
    </location>
</feature>
<feature type="sequence conflict" description="In Ref. 3; AAM11288." evidence="3" ref="3">
    <original>S</original>
    <variation>C</variation>
    <location>
        <position position="34"/>
    </location>
</feature>
<name>GOSR1_DROME</name>
<evidence type="ECO:0000250" key="1"/>
<evidence type="ECO:0000255" key="2"/>
<evidence type="ECO:0000305" key="3"/>